<organism>
    <name type="scientific">Yersinia enterocolitica serotype O:8 / biotype 1B (strain NCTC 13174 / 8081)</name>
    <dbReference type="NCBI Taxonomy" id="393305"/>
    <lineage>
        <taxon>Bacteria</taxon>
        <taxon>Pseudomonadati</taxon>
        <taxon>Pseudomonadota</taxon>
        <taxon>Gammaproteobacteria</taxon>
        <taxon>Enterobacterales</taxon>
        <taxon>Yersiniaceae</taxon>
        <taxon>Yersinia</taxon>
    </lineage>
</organism>
<dbReference type="EC" id="3.5.2.7" evidence="1"/>
<dbReference type="EMBL" id="AM286415">
    <property type="protein sequence ID" value="CAL12505.1"/>
    <property type="molecule type" value="Genomic_DNA"/>
</dbReference>
<dbReference type="RefSeq" id="WP_005169050.1">
    <property type="nucleotide sequence ID" value="NC_008800.1"/>
</dbReference>
<dbReference type="RefSeq" id="YP_001006669.1">
    <property type="nucleotide sequence ID" value="NC_008800.1"/>
</dbReference>
<dbReference type="SMR" id="A1JS25"/>
<dbReference type="KEGG" id="yen:YE2461"/>
<dbReference type="PATRIC" id="fig|393305.7.peg.2613"/>
<dbReference type="eggNOG" id="COG1228">
    <property type="taxonomic scope" value="Bacteria"/>
</dbReference>
<dbReference type="HOGENOM" id="CLU_041647_0_0_6"/>
<dbReference type="OrthoDB" id="9776455at2"/>
<dbReference type="UniPathway" id="UPA00379">
    <property type="reaction ID" value="UER00551"/>
</dbReference>
<dbReference type="Proteomes" id="UP000000642">
    <property type="component" value="Chromosome"/>
</dbReference>
<dbReference type="GO" id="GO:0005737">
    <property type="term" value="C:cytoplasm"/>
    <property type="evidence" value="ECO:0007669"/>
    <property type="project" value="UniProtKB-SubCell"/>
</dbReference>
<dbReference type="GO" id="GO:0050480">
    <property type="term" value="F:imidazolonepropionase activity"/>
    <property type="evidence" value="ECO:0007669"/>
    <property type="project" value="UniProtKB-UniRule"/>
</dbReference>
<dbReference type="GO" id="GO:0005506">
    <property type="term" value="F:iron ion binding"/>
    <property type="evidence" value="ECO:0007669"/>
    <property type="project" value="UniProtKB-UniRule"/>
</dbReference>
<dbReference type="GO" id="GO:0008270">
    <property type="term" value="F:zinc ion binding"/>
    <property type="evidence" value="ECO:0007669"/>
    <property type="project" value="UniProtKB-UniRule"/>
</dbReference>
<dbReference type="GO" id="GO:0019556">
    <property type="term" value="P:L-histidine catabolic process to glutamate and formamide"/>
    <property type="evidence" value="ECO:0007669"/>
    <property type="project" value="UniProtKB-UniPathway"/>
</dbReference>
<dbReference type="GO" id="GO:0019557">
    <property type="term" value="P:L-histidine catabolic process to glutamate and formate"/>
    <property type="evidence" value="ECO:0007669"/>
    <property type="project" value="UniProtKB-UniPathway"/>
</dbReference>
<dbReference type="CDD" id="cd01296">
    <property type="entry name" value="Imidazolone-5PH"/>
    <property type="match status" value="1"/>
</dbReference>
<dbReference type="FunFam" id="3.20.20.140:FF:000007">
    <property type="entry name" value="Imidazolonepropionase"/>
    <property type="match status" value="1"/>
</dbReference>
<dbReference type="Gene3D" id="3.20.20.140">
    <property type="entry name" value="Metal-dependent hydrolases"/>
    <property type="match status" value="1"/>
</dbReference>
<dbReference type="Gene3D" id="2.30.40.10">
    <property type="entry name" value="Urease, subunit C, domain 1"/>
    <property type="match status" value="1"/>
</dbReference>
<dbReference type="HAMAP" id="MF_00372">
    <property type="entry name" value="HutI"/>
    <property type="match status" value="1"/>
</dbReference>
<dbReference type="InterPro" id="IPR006680">
    <property type="entry name" value="Amidohydro-rel"/>
</dbReference>
<dbReference type="InterPro" id="IPR005920">
    <property type="entry name" value="HutI"/>
</dbReference>
<dbReference type="InterPro" id="IPR011059">
    <property type="entry name" value="Metal-dep_hydrolase_composite"/>
</dbReference>
<dbReference type="InterPro" id="IPR032466">
    <property type="entry name" value="Metal_Hydrolase"/>
</dbReference>
<dbReference type="NCBIfam" id="TIGR01224">
    <property type="entry name" value="hutI"/>
    <property type="match status" value="1"/>
</dbReference>
<dbReference type="PANTHER" id="PTHR42752">
    <property type="entry name" value="IMIDAZOLONEPROPIONASE"/>
    <property type="match status" value="1"/>
</dbReference>
<dbReference type="PANTHER" id="PTHR42752:SF1">
    <property type="entry name" value="IMIDAZOLONEPROPIONASE-RELATED"/>
    <property type="match status" value="1"/>
</dbReference>
<dbReference type="Pfam" id="PF01979">
    <property type="entry name" value="Amidohydro_1"/>
    <property type="match status" value="1"/>
</dbReference>
<dbReference type="SUPFAM" id="SSF51338">
    <property type="entry name" value="Composite domain of metallo-dependent hydrolases"/>
    <property type="match status" value="1"/>
</dbReference>
<dbReference type="SUPFAM" id="SSF51556">
    <property type="entry name" value="Metallo-dependent hydrolases"/>
    <property type="match status" value="1"/>
</dbReference>
<gene>
    <name evidence="1" type="primary">hutI</name>
    <name type="ordered locus">YE2461</name>
</gene>
<feature type="chain" id="PRO_0000306540" description="Imidazolonepropionase">
    <location>
        <begin position="1"/>
        <end position="406"/>
    </location>
</feature>
<feature type="binding site" evidence="1">
    <location>
        <position position="72"/>
    </location>
    <ligand>
        <name>Fe(3+)</name>
        <dbReference type="ChEBI" id="CHEBI:29034"/>
    </ligand>
</feature>
<feature type="binding site" evidence="1">
    <location>
        <position position="72"/>
    </location>
    <ligand>
        <name>Zn(2+)</name>
        <dbReference type="ChEBI" id="CHEBI:29105"/>
    </ligand>
</feature>
<feature type="binding site" evidence="1">
    <location>
        <position position="74"/>
    </location>
    <ligand>
        <name>Fe(3+)</name>
        <dbReference type="ChEBI" id="CHEBI:29034"/>
    </ligand>
</feature>
<feature type="binding site" evidence="1">
    <location>
        <position position="74"/>
    </location>
    <ligand>
        <name>Zn(2+)</name>
        <dbReference type="ChEBI" id="CHEBI:29105"/>
    </ligand>
</feature>
<feature type="binding site" evidence="1">
    <location>
        <position position="81"/>
    </location>
    <ligand>
        <name>4-imidazolone-5-propanoate</name>
        <dbReference type="ChEBI" id="CHEBI:77893"/>
    </ligand>
</feature>
<feature type="binding site" evidence="1">
    <location>
        <position position="144"/>
    </location>
    <ligand>
        <name>4-imidazolone-5-propanoate</name>
        <dbReference type="ChEBI" id="CHEBI:77893"/>
    </ligand>
</feature>
<feature type="binding site" evidence="1">
    <location>
        <position position="144"/>
    </location>
    <ligand>
        <name>N-formimidoyl-L-glutamate</name>
        <dbReference type="ChEBI" id="CHEBI:58928"/>
    </ligand>
</feature>
<feature type="binding site" evidence="1">
    <location>
        <position position="177"/>
    </location>
    <ligand>
        <name>4-imidazolone-5-propanoate</name>
        <dbReference type="ChEBI" id="CHEBI:77893"/>
    </ligand>
</feature>
<feature type="binding site" evidence="1">
    <location>
        <position position="242"/>
    </location>
    <ligand>
        <name>Fe(3+)</name>
        <dbReference type="ChEBI" id="CHEBI:29034"/>
    </ligand>
</feature>
<feature type="binding site" evidence="1">
    <location>
        <position position="242"/>
    </location>
    <ligand>
        <name>Zn(2+)</name>
        <dbReference type="ChEBI" id="CHEBI:29105"/>
    </ligand>
</feature>
<feature type="binding site" evidence="1">
    <location>
        <position position="245"/>
    </location>
    <ligand>
        <name>4-imidazolone-5-propanoate</name>
        <dbReference type="ChEBI" id="CHEBI:77893"/>
    </ligand>
</feature>
<feature type="binding site" evidence="1">
    <location>
        <position position="317"/>
    </location>
    <ligand>
        <name>Fe(3+)</name>
        <dbReference type="ChEBI" id="CHEBI:29034"/>
    </ligand>
</feature>
<feature type="binding site" evidence="1">
    <location>
        <position position="317"/>
    </location>
    <ligand>
        <name>Zn(2+)</name>
        <dbReference type="ChEBI" id="CHEBI:29105"/>
    </ligand>
</feature>
<feature type="binding site" evidence="1">
    <location>
        <position position="319"/>
    </location>
    <ligand>
        <name>N-formimidoyl-L-glutamate</name>
        <dbReference type="ChEBI" id="CHEBI:58928"/>
    </ligand>
</feature>
<feature type="binding site" evidence="1">
    <location>
        <position position="321"/>
    </location>
    <ligand>
        <name>N-formimidoyl-L-glutamate</name>
        <dbReference type="ChEBI" id="CHEBI:58928"/>
    </ligand>
</feature>
<feature type="binding site" evidence="1">
    <location>
        <position position="322"/>
    </location>
    <ligand>
        <name>4-imidazolone-5-propanoate</name>
        <dbReference type="ChEBI" id="CHEBI:77893"/>
    </ligand>
</feature>
<accession>A1JS25</accession>
<keyword id="KW-0963">Cytoplasm</keyword>
<keyword id="KW-0369">Histidine metabolism</keyword>
<keyword id="KW-0378">Hydrolase</keyword>
<keyword id="KW-0408">Iron</keyword>
<keyword id="KW-0479">Metal-binding</keyword>
<keyword id="KW-0862">Zinc</keyword>
<protein>
    <recommendedName>
        <fullName evidence="1">Imidazolonepropionase</fullName>
        <ecNumber evidence="1">3.5.2.7</ecNumber>
    </recommendedName>
    <alternativeName>
        <fullName evidence="1">Imidazolone-5-propionate hydrolase</fullName>
    </alternativeName>
</protein>
<reference key="1">
    <citation type="journal article" date="2006" name="PLoS Genet.">
        <title>The complete genome sequence and comparative genome analysis of the high pathogenicity Yersinia enterocolitica strain 8081.</title>
        <authorList>
            <person name="Thomson N.R."/>
            <person name="Howard S."/>
            <person name="Wren B.W."/>
            <person name="Holden M.T.G."/>
            <person name="Crossman L."/>
            <person name="Challis G.L."/>
            <person name="Churcher C."/>
            <person name="Mungall K."/>
            <person name="Brooks K."/>
            <person name="Chillingworth T."/>
            <person name="Feltwell T."/>
            <person name="Abdellah Z."/>
            <person name="Hauser H."/>
            <person name="Jagels K."/>
            <person name="Maddison M."/>
            <person name="Moule S."/>
            <person name="Sanders M."/>
            <person name="Whitehead S."/>
            <person name="Quail M.A."/>
            <person name="Dougan G."/>
            <person name="Parkhill J."/>
            <person name="Prentice M.B."/>
        </authorList>
    </citation>
    <scope>NUCLEOTIDE SEQUENCE [LARGE SCALE GENOMIC DNA]</scope>
    <source>
        <strain>NCTC 13174 / 8081</strain>
    </source>
</reference>
<evidence type="ECO:0000255" key="1">
    <source>
        <dbReference type="HAMAP-Rule" id="MF_00372"/>
    </source>
</evidence>
<comment type="function">
    <text evidence="1">Catalyzes the hydrolytic cleavage of the carbon-nitrogen bond in imidazolone-5-propanoate to yield N-formimidoyl-L-glutamate. It is the third step in the universal histidine degradation pathway.</text>
</comment>
<comment type="catalytic activity">
    <reaction evidence="1">
        <text>4-imidazolone-5-propanoate + H2O = N-formimidoyl-L-glutamate</text>
        <dbReference type="Rhea" id="RHEA:23660"/>
        <dbReference type="ChEBI" id="CHEBI:15377"/>
        <dbReference type="ChEBI" id="CHEBI:58928"/>
        <dbReference type="ChEBI" id="CHEBI:77893"/>
        <dbReference type="EC" id="3.5.2.7"/>
    </reaction>
</comment>
<comment type="cofactor">
    <cofactor evidence="1">
        <name>Zn(2+)</name>
        <dbReference type="ChEBI" id="CHEBI:29105"/>
    </cofactor>
    <cofactor evidence="1">
        <name>Fe(3+)</name>
        <dbReference type="ChEBI" id="CHEBI:29034"/>
    </cofactor>
    <text evidence="1">Binds 1 zinc or iron ion per subunit.</text>
</comment>
<comment type="pathway">
    <text evidence="1">Amino-acid degradation; L-histidine degradation into L-glutamate; N-formimidoyl-L-glutamate from L-histidine: step 3/3.</text>
</comment>
<comment type="subcellular location">
    <subcellularLocation>
        <location evidence="1">Cytoplasm</location>
    </subcellularLocation>
</comment>
<comment type="similarity">
    <text evidence="1">Belongs to the metallo-dependent hydrolases superfamily. HutI family.</text>
</comment>
<name>HUTI_YERE8</name>
<sequence>MVSTIHCDSLWYGADIVTMRGGKYHLIPQGAMAVTDGKIVWIGPYNELPRLSASREVIYSSGLITPGLIDCHTHLVFGGDRSAEFEQRLNGVSYAEIAANGGGIVSTVRATRNASEQQLLEQALFRLKPLLAEGVTCIEIKSGYGLSLESEIKMLRVARQLGELLPVTVKTTCLAAHALPPEFSGRADDYIDFVCDTIIPQVAKEKLADAVDAFCEHLAFSLAQVERVFLAAQQAGLPVKLHAEQLSSLHGSTLAAKFNAMSADHLEYATESDVRAMADAGTVAVLLPGAYYLLRETQCPPIELFRQYNVPMALASDANPGTSPALSLRLMLNMACTLFRMTPEEALAGVTCHAAQALGLQETQGTLETGKLANWVHWPLSHPAELAYWLGGQLPASVVFQGDARP</sequence>
<proteinExistence type="inferred from homology"/>